<reference key="1">
    <citation type="submission" date="1999-01" db="EMBL/GenBank/DDBJ databases">
        <title>Porcine liver factor XII.</title>
        <authorList>
            <person name="Takahashi T."/>
            <person name="Kihara T."/>
        </authorList>
    </citation>
    <scope>NUCLEOTIDE SEQUENCE [MRNA]</scope>
    <source>
        <tissue>Liver</tissue>
    </source>
</reference>
<comment type="function">
    <text evidence="2">Factor XII is a serum glycoprotein that participates in the initiation of blood coagulation, fibrinolysis, and the generation of bradykinin and angiotensin. Prekallikrein is cleaved by factor XII to form kallikrein, which then cleaves factor XII first to alpha-factor XIIa and then trypsin cleaves it to beta-factor XIIa. Alpha-factor XIIa activates factor XI to factor XIa (By similarity).</text>
</comment>
<comment type="catalytic activity">
    <reaction evidence="2">
        <text>Selective cleavage of Arg-|-Ile bonds in factor VII to form factor VIIa and factor XI to form factor XIa.</text>
        <dbReference type="EC" id="3.4.21.38"/>
    </reaction>
</comment>
<comment type="activity regulation">
    <text evidence="2">Activity is promoted in the presence of negatively charged surfaces.</text>
</comment>
<comment type="subunit">
    <text evidence="2">Interacts with HRG; the interaction, which is enhanced in the presence of zinc ions and inhibited by heparin-binding, inhibits factor XII autoactivation and contact-initiated coagulation.</text>
</comment>
<comment type="subcellular location">
    <subcellularLocation>
        <location>Secreted</location>
    </subcellularLocation>
</comment>
<comment type="PTM">
    <text evidence="1">O- and N-glycosylated.</text>
</comment>
<comment type="similarity">
    <text evidence="6">Belongs to the peptidase S1 family.</text>
</comment>
<name>FA12_PIG</name>
<gene>
    <name type="primary">F12</name>
</gene>
<protein>
    <recommendedName>
        <fullName>Coagulation factor XII</fullName>
        <ecNumber evidence="2">3.4.21.38</ecNumber>
    </recommendedName>
    <alternativeName>
        <fullName>Hageman factor</fullName>
        <shortName>HAF</shortName>
    </alternativeName>
    <component>
        <recommendedName>
            <fullName>Coagulation factor XIIa heavy chain</fullName>
        </recommendedName>
    </component>
    <component>
        <recommendedName>
            <fullName>Coagulation factor XIIa light chain</fullName>
        </recommendedName>
    </component>
</protein>
<proteinExistence type="evidence at transcript level"/>
<organism>
    <name type="scientific">Sus scrofa</name>
    <name type="common">Pig</name>
    <dbReference type="NCBI Taxonomy" id="9823"/>
    <lineage>
        <taxon>Eukaryota</taxon>
        <taxon>Metazoa</taxon>
        <taxon>Chordata</taxon>
        <taxon>Craniata</taxon>
        <taxon>Vertebrata</taxon>
        <taxon>Euteleostomi</taxon>
        <taxon>Mammalia</taxon>
        <taxon>Eutheria</taxon>
        <taxon>Laurasiatheria</taxon>
        <taxon>Artiodactyla</taxon>
        <taxon>Suina</taxon>
        <taxon>Suidae</taxon>
        <taxon>Sus</taxon>
    </lineage>
</organism>
<evidence type="ECO:0000250" key="1"/>
<evidence type="ECO:0000250" key="2">
    <source>
        <dbReference type="UniProtKB" id="P00748"/>
    </source>
</evidence>
<evidence type="ECO:0000255" key="3"/>
<evidence type="ECO:0000255" key="4">
    <source>
        <dbReference type="PROSITE-ProRule" id="PRU00076"/>
    </source>
</evidence>
<evidence type="ECO:0000255" key="5">
    <source>
        <dbReference type="PROSITE-ProRule" id="PRU00121"/>
    </source>
</evidence>
<evidence type="ECO:0000255" key="6">
    <source>
        <dbReference type="PROSITE-ProRule" id="PRU00274"/>
    </source>
</evidence>
<evidence type="ECO:0000255" key="7">
    <source>
        <dbReference type="PROSITE-ProRule" id="PRU00478"/>
    </source>
</evidence>
<evidence type="ECO:0000255" key="8">
    <source>
        <dbReference type="PROSITE-ProRule" id="PRU00479"/>
    </source>
</evidence>
<evidence type="ECO:0000256" key="9">
    <source>
        <dbReference type="SAM" id="MobiDB-lite"/>
    </source>
</evidence>
<feature type="signal peptide" evidence="1">
    <location>
        <begin position="1"/>
        <end position="19"/>
    </location>
</feature>
<feature type="chain" id="PRO_0000232379" description="Coagulation factor XIIa heavy chain">
    <location>
        <begin position="20"/>
        <end position="371"/>
    </location>
</feature>
<feature type="chain" id="PRO_0000232382" description="Coagulation factor XIIa light chain">
    <location>
        <begin position="372"/>
        <end position="616"/>
    </location>
</feature>
<feature type="domain" description="Fibronectin type-II" evidence="7 8">
    <location>
        <begin position="42"/>
        <end position="90"/>
    </location>
</feature>
<feature type="domain" description="EGF-like 1" evidence="4">
    <location>
        <begin position="94"/>
        <end position="131"/>
    </location>
</feature>
<feature type="domain" description="Fibronectin type-I" evidence="7">
    <location>
        <begin position="133"/>
        <end position="173"/>
    </location>
</feature>
<feature type="domain" description="EGF-like 2" evidence="4">
    <location>
        <begin position="174"/>
        <end position="210"/>
    </location>
</feature>
<feature type="domain" description="Kringle" evidence="5">
    <location>
        <begin position="216"/>
        <end position="295"/>
    </location>
</feature>
<feature type="domain" description="Peptidase S1" evidence="6">
    <location>
        <begin position="372"/>
        <end position="615"/>
    </location>
</feature>
<feature type="region of interest" description="Disordered" evidence="9">
    <location>
        <begin position="303"/>
        <end position="342"/>
    </location>
</feature>
<feature type="compositionally biased region" description="Polar residues" evidence="9">
    <location>
        <begin position="325"/>
        <end position="338"/>
    </location>
</feature>
<feature type="active site" description="Charge relay system" evidence="1">
    <location>
        <position position="411"/>
    </location>
</feature>
<feature type="active site" description="Charge relay system" evidence="1">
    <location>
        <position position="460"/>
    </location>
</feature>
<feature type="active site" description="Charge relay system" evidence="1">
    <location>
        <position position="564"/>
    </location>
</feature>
<feature type="glycosylation site" description="O-linked (Fuc) threonine" evidence="1">
    <location>
        <position position="109"/>
    </location>
</feature>
<feature type="glycosylation site" description="N-linked (GlcNAc...) asparagine" evidence="3">
    <location>
        <position position="249"/>
    </location>
</feature>
<feature type="glycosylation site" description="N-linked (GlcNAc...) asparagine" evidence="3">
    <location>
        <position position="271"/>
    </location>
</feature>
<feature type="glycosylation site" description="N-linked (GlcNAc...) asparagine" evidence="3">
    <location>
        <position position="335"/>
    </location>
</feature>
<feature type="glycosylation site" description="N-linked (GlcNAc...) asparagine" evidence="3">
    <location>
        <position position="432"/>
    </location>
</feature>
<feature type="disulfide bond" evidence="1">
    <location>
        <begin position="47"/>
        <end position="73"/>
    </location>
</feature>
<feature type="disulfide bond" evidence="1">
    <location>
        <begin position="61"/>
        <end position="88"/>
    </location>
</feature>
<feature type="disulfide bond" evidence="1">
    <location>
        <begin position="98"/>
        <end position="110"/>
    </location>
</feature>
<feature type="disulfide bond" evidence="1">
    <location>
        <begin position="104"/>
        <end position="119"/>
    </location>
</feature>
<feature type="disulfide bond" evidence="1">
    <location>
        <begin position="121"/>
        <end position="130"/>
    </location>
</feature>
<feature type="disulfide bond" evidence="1">
    <location>
        <begin position="135"/>
        <end position="163"/>
    </location>
</feature>
<feature type="disulfide bond" evidence="1">
    <location>
        <begin position="161"/>
        <end position="170"/>
    </location>
</feature>
<feature type="disulfide bond" evidence="1">
    <location>
        <begin position="178"/>
        <end position="189"/>
    </location>
</feature>
<feature type="disulfide bond" evidence="1">
    <location>
        <begin position="183"/>
        <end position="198"/>
    </location>
</feature>
<feature type="disulfide bond" evidence="1">
    <location>
        <begin position="200"/>
        <end position="209"/>
    </location>
</feature>
<feature type="disulfide bond" evidence="1">
    <location>
        <begin position="217"/>
        <end position="295"/>
    </location>
</feature>
<feature type="disulfide bond" evidence="1">
    <location>
        <begin position="238"/>
        <end position="277"/>
    </location>
</feature>
<feature type="disulfide bond" evidence="1">
    <location>
        <begin position="266"/>
        <end position="290"/>
    </location>
</feature>
<feature type="disulfide bond" evidence="1">
    <location>
        <begin position="358"/>
        <end position="485"/>
    </location>
</feature>
<feature type="disulfide bond" evidence="1">
    <location>
        <begin position="396"/>
        <end position="412"/>
    </location>
</feature>
<feature type="disulfide bond" evidence="1">
    <location>
        <begin position="404"/>
        <end position="474"/>
    </location>
</feature>
<feature type="disulfide bond" evidence="1">
    <location>
        <begin position="435"/>
        <end position="438"/>
    </location>
</feature>
<feature type="disulfide bond" evidence="1">
    <location>
        <begin position="501"/>
        <end position="570"/>
    </location>
</feature>
<feature type="disulfide bond" evidence="1">
    <location>
        <begin position="533"/>
        <end position="549"/>
    </location>
</feature>
<feature type="disulfide bond" evidence="1">
    <location>
        <begin position="560"/>
        <end position="591"/>
    </location>
</feature>
<sequence>MRALLLLGILLVSLESALLIPPWKDPRKHKVMASEHTVVLTVTGEPCHFPFQYYRQLYYKCIQRGQRGPRPWCATTPNFEKDQRWAYCLEPMKVKDHCNKGNPCQKGGTCVNMPNGPHCICPDHFTGKHCQKEKCFEPQFLQFFQENEIWHRFEPAGVSKCQCKGPKAQCKPVASQVCSTNPCLNGGSCLQTEGHRLCRCPTGYAGRLCDVDLKERCYSDRGLSYRGMAQTTLSGAPCQPWASEATYWNMTAEQALNWGLGDHAFCRNPDNDTRPWCFVWRGDQLSWQYCRLARCQAPIGEAPPILTPTQSPSEHQDSPLLSREPQPTTQTPSQNLTSAWCAPPEQRGPLPSAGLVGCGQRLRKRLSSLNRIVGGLVALPGAHPYIAALYWGQNFCAGSLIAPCWVLTAAHCLQNRPAPEELTVVLGQDRHNQSCEQCQTLAVRSYRLHESYSPKTYQHDLALVRLKETADGCCAHPSPFVQPVCLPRSVASSAEPEGALCEVAGWGHQFEGAEEYSSFLQEAQVPLISPERCSAADVHGAAFTPGMLCAGFLEGGTDACQGDSGGPLVCEDETAERQLVLRGIVSWGSGCGDRLKPGVYTDVANYLAWIQEHTTS</sequence>
<accession>O97507</accession>
<keyword id="KW-0094">Blood coagulation</keyword>
<keyword id="KW-1015">Disulfide bond</keyword>
<keyword id="KW-0245">EGF-like domain</keyword>
<keyword id="KW-0280">Fibrinolysis</keyword>
<keyword id="KW-0325">Glycoprotein</keyword>
<keyword id="KW-0356">Hemostasis</keyword>
<keyword id="KW-0378">Hydrolase</keyword>
<keyword id="KW-0420">Kringle</keyword>
<keyword id="KW-0645">Protease</keyword>
<keyword id="KW-1185">Reference proteome</keyword>
<keyword id="KW-0677">Repeat</keyword>
<keyword id="KW-0964">Secreted</keyword>
<keyword id="KW-0720">Serine protease</keyword>
<keyword id="KW-0732">Signal</keyword>
<keyword id="KW-0865">Zymogen</keyword>
<dbReference type="EC" id="3.4.21.38" evidence="2"/>
<dbReference type="EMBL" id="AB022426">
    <property type="protein sequence ID" value="BAA37148.1"/>
    <property type="molecule type" value="mRNA"/>
</dbReference>
<dbReference type="RefSeq" id="NP_999407.1">
    <property type="nucleotide sequence ID" value="NM_214242.1"/>
</dbReference>
<dbReference type="SMR" id="O97507"/>
<dbReference type="FunCoup" id="O97507">
    <property type="interactions" value="265"/>
</dbReference>
<dbReference type="STRING" id="9823.ENSSSCP00000056476"/>
<dbReference type="MEROPS" id="S01.211"/>
<dbReference type="GlyCosmos" id="O97507">
    <property type="glycosylation" value="5 sites, No reported glycans"/>
</dbReference>
<dbReference type="GlyGen" id="O97507">
    <property type="glycosylation" value="6 sites"/>
</dbReference>
<dbReference type="PaxDb" id="9823-ENSSSCP00000024170"/>
<dbReference type="PeptideAtlas" id="O97507"/>
<dbReference type="GeneID" id="397474"/>
<dbReference type="KEGG" id="ssc:397474"/>
<dbReference type="CTD" id="2161"/>
<dbReference type="eggNOG" id="KOG1217">
    <property type="taxonomic scope" value="Eukaryota"/>
</dbReference>
<dbReference type="eggNOG" id="KOG3627">
    <property type="taxonomic scope" value="Eukaryota"/>
</dbReference>
<dbReference type="HOGENOM" id="CLU_057870_0_0_1"/>
<dbReference type="InParanoid" id="O97507"/>
<dbReference type="OrthoDB" id="9925451at2759"/>
<dbReference type="Proteomes" id="UP000008227">
    <property type="component" value="Unplaced"/>
</dbReference>
<dbReference type="Proteomes" id="UP000314985">
    <property type="component" value="Unplaced"/>
</dbReference>
<dbReference type="Proteomes" id="UP000694570">
    <property type="component" value="Unplaced"/>
</dbReference>
<dbReference type="Proteomes" id="UP000694571">
    <property type="component" value="Unplaced"/>
</dbReference>
<dbReference type="Proteomes" id="UP000694720">
    <property type="component" value="Unplaced"/>
</dbReference>
<dbReference type="Proteomes" id="UP000694722">
    <property type="component" value="Unplaced"/>
</dbReference>
<dbReference type="Proteomes" id="UP000694723">
    <property type="component" value="Unplaced"/>
</dbReference>
<dbReference type="Proteomes" id="UP000694724">
    <property type="component" value="Unplaced"/>
</dbReference>
<dbReference type="Proteomes" id="UP000694725">
    <property type="component" value="Unplaced"/>
</dbReference>
<dbReference type="Proteomes" id="UP000694726">
    <property type="component" value="Unplaced"/>
</dbReference>
<dbReference type="Proteomes" id="UP000694727">
    <property type="component" value="Unplaced"/>
</dbReference>
<dbReference type="Proteomes" id="UP000694728">
    <property type="component" value="Unplaced"/>
</dbReference>
<dbReference type="GO" id="GO:0005615">
    <property type="term" value="C:extracellular space"/>
    <property type="evidence" value="ECO:0000318"/>
    <property type="project" value="GO_Central"/>
</dbReference>
<dbReference type="GO" id="GO:0005791">
    <property type="term" value="C:rough endoplasmic reticulum"/>
    <property type="evidence" value="ECO:0000318"/>
    <property type="project" value="GO_Central"/>
</dbReference>
<dbReference type="GO" id="GO:0005509">
    <property type="term" value="F:calcium ion binding"/>
    <property type="evidence" value="ECO:0007669"/>
    <property type="project" value="InterPro"/>
</dbReference>
<dbReference type="GO" id="GO:0004252">
    <property type="term" value="F:serine-type endopeptidase activity"/>
    <property type="evidence" value="ECO:0000318"/>
    <property type="project" value="GO_Central"/>
</dbReference>
<dbReference type="GO" id="GO:0007596">
    <property type="term" value="P:blood coagulation"/>
    <property type="evidence" value="ECO:0000318"/>
    <property type="project" value="GO_Central"/>
</dbReference>
<dbReference type="GO" id="GO:0042730">
    <property type="term" value="P:fibrinolysis"/>
    <property type="evidence" value="ECO:0007669"/>
    <property type="project" value="UniProtKB-KW"/>
</dbReference>
<dbReference type="GO" id="GO:0031638">
    <property type="term" value="P:zymogen activation"/>
    <property type="evidence" value="ECO:0000318"/>
    <property type="project" value="GO_Central"/>
</dbReference>
<dbReference type="CDD" id="cd00054">
    <property type="entry name" value="EGF_CA"/>
    <property type="match status" value="2"/>
</dbReference>
<dbReference type="CDD" id="cd00061">
    <property type="entry name" value="FN1"/>
    <property type="match status" value="1"/>
</dbReference>
<dbReference type="CDD" id="cd00062">
    <property type="entry name" value="FN2"/>
    <property type="match status" value="1"/>
</dbReference>
<dbReference type="CDD" id="cd00108">
    <property type="entry name" value="KR"/>
    <property type="match status" value="1"/>
</dbReference>
<dbReference type="CDD" id="cd00190">
    <property type="entry name" value="Tryp_SPc"/>
    <property type="match status" value="1"/>
</dbReference>
<dbReference type="FunFam" id="2.10.10.10:FF:000010">
    <property type="entry name" value="Coagulation factor XII"/>
    <property type="match status" value="1"/>
</dbReference>
<dbReference type="FunFam" id="2.10.25.10:FF:000576">
    <property type="entry name" value="Coagulation factor XII"/>
    <property type="match status" value="1"/>
</dbReference>
<dbReference type="FunFam" id="2.40.10.10:FF:000097">
    <property type="entry name" value="Coagulation factor XII"/>
    <property type="match status" value="1"/>
</dbReference>
<dbReference type="FunFam" id="2.40.10.10:FF:000098">
    <property type="entry name" value="Coagulation factor XII"/>
    <property type="match status" value="1"/>
</dbReference>
<dbReference type="FunFam" id="2.40.20.10:FF:000016">
    <property type="entry name" value="Coagulation factor XII"/>
    <property type="match status" value="1"/>
</dbReference>
<dbReference type="FunFam" id="2.10.25.10:FF:000338">
    <property type="entry name" value="hepatocyte growth factor activator"/>
    <property type="match status" value="1"/>
</dbReference>
<dbReference type="Gene3D" id="2.10.10.10">
    <property type="entry name" value="Fibronectin, type II, collagen-binding"/>
    <property type="match status" value="1"/>
</dbReference>
<dbReference type="Gene3D" id="2.10.25.10">
    <property type="entry name" value="Laminin"/>
    <property type="match status" value="2"/>
</dbReference>
<dbReference type="Gene3D" id="2.40.20.10">
    <property type="entry name" value="Plasminogen Kringle 4"/>
    <property type="match status" value="1"/>
</dbReference>
<dbReference type="Gene3D" id="2.40.10.10">
    <property type="entry name" value="Trypsin-like serine proteases"/>
    <property type="match status" value="2"/>
</dbReference>
<dbReference type="InterPro" id="IPR014394">
    <property type="entry name" value="Coagulation_fac_XII/HGFA"/>
</dbReference>
<dbReference type="InterPro" id="IPR001881">
    <property type="entry name" value="EGF-like_Ca-bd_dom"/>
</dbReference>
<dbReference type="InterPro" id="IPR000742">
    <property type="entry name" value="EGF-like_dom"/>
</dbReference>
<dbReference type="InterPro" id="IPR000083">
    <property type="entry name" value="Fibronectin_type1"/>
</dbReference>
<dbReference type="InterPro" id="IPR000562">
    <property type="entry name" value="FN_type2_dom"/>
</dbReference>
<dbReference type="InterPro" id="IPR036943">
    <property type="entry name" value="FN_type2_sf"/>
</dbReference>
<dbReference type="InterPro" id="IPR000001">
    <property type="entry name" value="Kringle"/>
</dbReference>
<dbReference type="InterPro" id="IPR013806">
    <property type="entry name" value="Kringle-like"/>
</dbReference>
<dbReference type="InterPro" id="IPR018056">
    <property type="entry name" value="Kringle_CS"/>
</dbReference>
<dbReference type="InterPro" id="IPR038178">
    <property type="entry name" value="Kringle_sf"/>
</dbReference>
<dbReference type="InterPro" id="IPR009003">
    <property type="entry name" value="Peptidase_S1_PA"/>
</dbReference>
<dbReference type="InterPro" id="IPR043504">
    <property type="entry name" value="Peptidase_S1_PA_chymotrypsin"/>
</dbReference>
<dbReference type="InterPro" id="IPR001314">
    <property type="entry name" value="Peptidase_S1A"/>
</dbReference>
<dbReference type="InterPro" id="IPR050127">
    <property type="entry name" value="Serine_Proteases_S1"/>
</dbReference>
<dbReference type="InterPro" id="IPR001254">
    <property type="entry name" value="Trypsin_dom"/>
</dbReference>
<dbReference type="InterPro" id="IPR018114">
    <property type="entry name" value="TRYPSIN_HIS"/>
</dbReference>
<dbReference type="InterPro" id="IPR033116">
    <property type="entry name" value="TRYPSIN_SER"/>
</dbReference>
<dbReference type="PANTHER" id="PTHR24264:SF46">
    <property type="entry name" value="COAGULATION FACTOR XII"/>
    <property type="match status" value="1"/>
</dbReference>
<dbReference type="PANTHER" id="PTHR24264">
    <property type="entry name" value="TRYPSIN-RELATED"/>
    <property type="match status" value="1"/>
</dbReference>
<dbReference type="Pfam" id="PF00008">
    <property type="entry name" value="EGF"/>
    <property type="match status" value="2"/>
</dbReference>
<dbReference type="Pfam" id="PF00039">
    <property type="entry name" value="fn1"/>
    <property type="match status" value="1"/>
</dbReference>
<dbReference type="Pfam" id="PF00040">
    <property type="entry name" value="fn2"/>
    <property type="match status" value="1"/>
</dbReference>
<dbReference type="Pfam" id="PF00051">
    <property type="entry name" value="Kringle"/>
    <property type="match status" value="1"/>
</dbReference>
<dbReference type="Pfam" id="PF00089">
    <property type="entry name" value="Trypsin"/>
    <property type="match status" value="1"/>
</dbReference>
<dbReference type="PIRSF" id="PIRSF001146">
    <property type="entry name" value="Factor_XII_HGFA"/>
    <property type="match status" value="1"/>
</dbReference>
<dbReference type="PRINTS" id="PR00722">
    <property type="entry name" value="CHYMOTRYPSIN"/>
</dbReference>
<dbReference type="PRINTS" id="PR00013">
    <property type="entry name" value="FNTYPEII"/>
</dbReference>
<dbReference type="PRINTS" id="PR00018">
    <property type="entry name" value="KRINGLE"/>
</dbReference>
<dbReference type="SMART" id="SM00181">
    <property type="entry name" value="EGF"/>
    <property type="match status" value="2"/>
</dbReference>
<dbReference type="SMART" id="SM00179">
    <property type="entry name" value="EGF_CA"/>
    <property type="match status" value="2"/>
</dbReference>
<dbReference type="SMART" id="SM00058">
    <property type="entry name" value="FN1"/>
    <property type="match status" value="1"/>
</dbReference>
<dbReference type="SMART" id="SM00059">
    <property type="entry name" value="FN2"/>
    <property type="match status" value="1"/>
</dbReference>
<dbReference type="SMART" id="SM00130">
    <property type="entry name" value="KR"/>
    <property type="match status" value="1"/>
</dbReference>
<dbReference type="SMART" id="SM00020">
    <property type="entry name" value="Tryp_SPc"/>
    <property type="match status" value="1"/>
</dbReference>
<dbReference type="SUPFAM" id="SSF57196">
    <property type="entry name" value="EGF/Laminin"/>
    <property type="match status" value="1"/>
</dbReference>
<dbReference type="SUPFAM" id="SSF57440">
    <property type="entry name" value="Kringle-like"/>
    <property type="match status" value="2"/>
</dbReference>
<dbReference type="SUPFAM" id="SSF50494">
    <property type="entry name" value="Trypsin-like serine proteases"/>
    <property type="match status" value="1"/>
</dbReference>
<dbReference type="PROSITE" id="PS00022">
    <property type="entry name" value="EGF_1"/>
    <property type="match status" value="2"/>
</dbReference>
<dbReference type="PROSITE" id="PS01186">
    <property type="entry name" value="EGF_2"/>
    <property type="match status" value="1"/>
</dbReference>
<dbReference type="PROSITE" id="PS50026">
    <property type="entry name" value="EGF_3"/>
    <property type="match status" value="2"/>
</dbReference>
<dbReference type="PROSITE" id="PS01253">
    <property type="entry name" value="FN1_1"/>
    <property type="match status" value="1"/>
</dbReference>
<dbReference type="PROSITE" id="PS51091">
    <property type="entry name" value="FN1_2"/>
    <property type="match status" value="1"/>
</dbReference>
<dbReference type="PROSITE" id="PS00023">
    <property type="entry name" value="FN2_1"/>
    <property type="match status" value="1"/>
</dbReference>
<dbReference type="PROSITE" id="PS51092">
    <property type="entry name" value="FN2_2"/>
    <property type="match status" value="1"/>
</dbReference>
<dbReference type="PROSITE" id="PS00021">
    <property type="entry name" value="KRINGLE_1"/>
    <property type="match status" value="1"/>
</dbReference>
<dbReference type="PROSITE" id="PS50070">
    <property type="entry name" value="KRINGLE_2"/>
    <property type="match status" value="1"/>
</dbReference>
<dbReference type="PROSITE" id="PS50240">
    <property type="entry name" value="TRYPSIN_DOM"/>
    <property type="match status" value="1"/>
</dbReference>
<dbReference type="PROSITE" id="PS00134">
    <property type="entry name" value="TRYPSIN_HIS"/>
    <property type="match status" value="1"/>
</dbReference>
<dbReference type="PROSITE" id="PS00135">
    <property type="entry name" value="TRYPSIN_SER"/>
    <property type="match status" value="1"/>
</dbReference>